<sequence length="631" mass="68305">MTAPPGARPRAASPPPNMRSRDFWGSAARLVKRLAPQRRLSIAVITLGIAGTTIGVIVPRILGHATDLLFNGVIGRGLPGGITKAQAVASARARGDNTFADLLSGMNVVPGQGVDFAAVERTLALALALYLAAALMIWAQARLLNLTVQKTMVRLRTDVEDKVHRLPLSYFDGQQRGELLSRVTNDIDNLQSSLSMTISQLVTSILTMVAVLAMMVSISGLLALITLLTVPLSLLVTRAITRRSQPLFVAHWTSTGRLNAHLEETYSGFTVVKTFGHQAAARERFHELNDDVYQAGFGAQFLSGLVQPATAFIGNLGYVAVAVAGGLQVATGQITLGSIQAFIQYIRQFNMPLSQLAGMYNALQSGVASAERVFDVLDEPEESPEPEPELPNLTGRVEFEHVNFAYLPGTPVIRDLSLVAEPGSTVAIVGPTGAGKTTLVNLLMRFYEIGSGRILIDGVDIASVSRQSLRSRIGMVLQDTWLYDGTIAENIAYGRPEATTDEIVEAARAAHVDRFVNTLPAGYQTRVSGDGGSISVGEKQLITIARAFLARPQLLILDEATSSVDTRTELLIQRAMRELRRDRTSFIIAHRLSTIRDADHILVVQTGQIVERGNHAELLARRGVYYQMTRA</sequence>
<accession>P9WQJ2</accession>
<accession>L0T955</accession>
<accession>P63397</accession>
<accession>Q11047</accession>
<name>FATRP_MYCTO</name>
<gene>
    <name type="ordered locus">MT1310</name>
</gene>
<proteinExistence type="inferred from homology"/>
<organism>
    <name type="scientific">Mycobacterium tuberculosis (strain CDC 1551 / Oshkosh)</name>
    <dbReference type="NCBI Taxonomy" id="83331"/>
    <lineage>
        <taxon>Bacteria</taxon>
        <taxon>Bacillati</taxon>
        <taxon>Actinomycetota</taxon>
        <taxon>Actinomycetes</taxon>
        <taxon>Mycobacteriales</taxon>
        <taxon>Mycobacteriaceae</taxon>
        <taxon>Mycobacterium</taxon>
        <taxon>Mycobacterium tuberculosis complex</taxon>
    </lineage>
</organism>
<comment type="function">
    <text evidence="1">ABC transporter involved in fatty acid import. Transmembrane domains (TMD) form a pore in the membrane and the ATP-binding domain (NBD) is responsible for energy generation.</text>
</comment>
<comment type="subcellular location">
    <subcellularLocation>
        <location evidence="1">Cell inner membrane</location>
        <topology evidence="2">Multi-pass membrane protein</topology>
    </subcellularLocation>
</comment>
<comment type="domain">
    <text evidence="1">The ATP-binding domain (NBD) and the transmembrane domain (TMD) are fused.</text>
</comment>
<comment type="similarity">
    <text evidence="6">Belongs to the ABC transporter superfamily. Lipid exporter (TC 3.A.1.106) family.</text>
</comment>
<feature type="chain" id="PRO_0000426766" description="Fatty acid ABC transporter ATP-binding/permease protein">
    <location>
        <begin position="1"/>
        <end position="631"/>
    </location>
</feature>
<feature type="transmembrane region" description="Helical" evidence="2">
    <location>
        <begin position="42"/>
        <end position="62"/>
    </location>
</feature>
<feature type="transmembrane region" description="Helical" evidence="2">
    <location>
        <begin position="123"/>
        <end position="143"/>
    </location>
</feature>
<feature type="transmembrane region" description="Helical" evidence="2">
    <location>
        <begin position="205"/>
        <end position="225"/>
    </location>
</feature>
<feature type="domain" description="ABC transmembrane type-1" evidence="4">
    <location>
        <begin position="42"/>
        <end position="365"/>
    </location>
</feature>
<feature type="domain" description="ABC transporter" evidence="3">
    <location>
        <begin position="397"/>
        <end position="631"/>
    </location>
</feature>
<feature type="region of interest" description="Disordered" evidence="5">
    <location>
        <begin position="1"/>
        <end position="20"/>
    </location>
</feature>
<feature type="compositionally biased region" description="Low complexity" evidence="5">
    <location>
        <begin position="1"/>
        <end position="11"/>
    </location>
</feature>
<feature type="binding site" evidence="3">
    <location>
        <begin position="430"/>
        <end position="437"/>
    </location>
    <ligand>
        <name>ATP</name>
        <dbReference type="ChEBI" id="CHEBI:30616"/>
    </ligand>
</feature>
<evidence type="ECO:0000250" key="1">
    <source>
        <dbReference type="UniProtKB" id="P9WQJ3"/>
    </source>
</evidence>
<evidence type="ECO:0000255" key="2"/>
<evidence type="ECO:0000255" key="3">
    <source>
        <dbReference type="PROSITE-ProRule" id="PRU00434"/>
    </source>
</evidence>
<evidence type="ECO:0000255" key="4">
    <source>
        <dbReference type="PROSITE-ProRule" id="PRU00441"/>
    </source>
</evidence>
<evidence type="ECO:0000256" key="5">
    <source>
        <dbReference type="SAM" id="MobiDB-lite"/>
    </source>
</evidence>
<evidence type="ECO:0000305" key="6"/>
<dbReference type="EC" id="7.6.2.-" evidence="1"/>
<dbReference type="EMBL" id="AE000516">
    <property type="protein sequence ID" value="AAK45570.1"/>
    <property type="molecule type" value="Genomic_DNA"/>
</dbReference>
<dbReference type="PIR" id="H70754">
    <property type="entry name" value="H70754"/>
</dbReference>
<dbReference type="RefSeq" id="WP_003406569.1">
    <property type="nucleotide sequence ID" value="NZ_KK341227.1"/>
</dbReference>
<dbReference type="SMR" id="P9WQJ2"/>
<dbReference type="KEGG" id="mtc:MT1310"/>
<dbReference type="PATRIC" id="fig|83331.31.peg.1415"/>
<dbReference type="HOGENOM" id="CLU_000604_84_4_11"/>
<dbReference type="Proteomes" id="UP000001020">
    <property type="component" value="Chromosome"/>
</dbReference>
<dbReference type="GO" id="GO:0005886">
    <property type="term" value="C:plasma membrane"/>
    <property type="evidence" value="ECO:0007669"/>
    <property type="project" value="UniProtKB-SubCell"/>
</dbReference>
<dbReference type="GO" id="GO:0015421">
    <property type="term" value="F:ABC-type oligopeptide transporter activity"/>
    <property type="evidence" value="ECO:0007669"/>
    <property type="project" value="TreeGrafter"/>
</dbReference>
<dbReference type="GO" id="GO:0005524">
    <property type="term" value="F:ATP binding"/>
    <property type="evidence" value="ECO:0007669"/>
    <property type="project" value="UniProtKB-KW"/>
</dbReference>
<dbReference type="GO" id="GO:0016887">
    <property type="term" value="F:ATP hydrolysis activity"/>
    <property type="evidence" value="ECO:0007669"/>
    <property type="project" value="InterPro"/>
</dbReference>
<dbReference type="CDD" id="cd18547">
    <property type="entry name" value="ABC_6TM_Tm288_like"/>
    <property type="match status" value="1"/>
</dbReference>
<dbReference type="CDD" id="cd03254">
    <property type="entry name" value="ABCC_Glucan_exporter_like"/>
    <property type="match status" value="1"/>
</dbReference>
<dbReference type="FunFam" id="3.40.50.300:FF:000287">
    <property type="entry name" value="Multidrug ABC transporter ATP-binding protein"/>
    <property type="match status" value="1"/>
</dbReference>
<dbReference type="Gene3D" id="1.20.1560.10">
    <property type="entry name" value="ABC transporter type 1, transmembrane domain"/>
    <property type="match status" value="1"/>
</dbReference>
<dbReference type="Gene3D" id="3.40.50.300">
    <property type="entry name" value="P-loop containing nucleotide triphosphate hydrolases"/>
    <property type="match status" value="1"/>
</dbReference>
<dbReference type="InterPro" id="IPR003593">
    <property type="entry name" value="AAA+_ATPase"/>
</dbReference>
<dbReference type="InterPro" id="IPR011527">
    <property type="entry name" value="ABC1_TM_dom"/>
</dbReference>
<dbReference type="InterPro" id="IPR036640">
    <property type="entry name" value="ABC1_TM_sf"/>
</dbReference>
<dbReference type="InterPro" id="IPR003439">
    <property type="entry name" value="ABC_transporter-like_ATP-bd"/>
</dbReference>
<dbReference type="InterPro" id="IPR017871">
    <property type="entry name" value="ABC_transporter-like_CS"/>
</dbReference>
<dbReference type="InterPro" id="IPR027417">
    <property type="entry name" value="P-loop_NTPase"/>
</dbReference>
<dbReference type="InterPro" id="IPR039421">
    <property type="entry name" value="Type_1_exporter"/>
</dbReference>
<dbReference type="PANTHER" id="PTHR43394:SF1">
    <property type="entry name" value="ATP-BINDING CASSETTE SUB-FAMILY B MEMBER 10, MITOCHONDRIAL"/>
    <property type="match status" value="1"/>
</dbReference>
<dbReference type="PANTHER" id="PTHR43394">
    <property type="entry name" value="ATP-DEPENDENT PERMEASE MDL1, MITOCHONDRIAL"/>
    <property type="match status" value="1"/>
</dbReference>
<dbReference type="Pfam" id="PF00664">
    <property type="entry name" value="ABC_membrane"/>
    <property type="match status" value="1"/>
</dbReference>
<dbReference type="Pfam" id="PF00005">
    <property type="entry name" value="ABC_tran"/>
    <property type="match status" value="1"/>
</dbReference>
<dbReference type="SMART" id="SM00382">
    <property type="entry name" value="AAA"/>
    <property type="match status" value="1"/>
</dbReference>
<dbReference type="SUPFAM" id="SSF90123">
    <property type="entry name" value="ABC transporter transmembrane region"/>
    <property type="match status" value="1"/>
</dbReference>
<dbReference type="SUPFAM" id="SSF52540">
    <property type="entry name" value="P-loop containing nucleoside triphosphate hydrolases"/>
    <property type="match status" value="1"/>
</dbReference>
<dbReference type="PROSITE" id="PS50929">
    <property type="entry name" value="ABC_TM1F"/>
    <property type="match status" value="1"/>
</dbReference>
<dbReference type="PROSITE" id="PS00211">
    <property type="entry name" value="ABC_TRANSPORTER_1"/>
    <property type="match status" value="1"/>
</dbReference>
<dbReference type="PROSITE" id="PS50893">
    <property type="entry name" value="ABC_TRANSPORTER_2"/>
    <property type="match status" value="1"/>
</dbReference>
<protein>
    <recommendedName>
        <fullName evidence="1">Fatty acid ABC transporter ATP-binding/permease protein</fullName>
        <ecNumber evidence="1">7.6.2.-</ecNumber>
    </recommendedName>
</protein>
<reference key="1">
    <citation type="journal article" date="2002" name="J. Bacteriol.">
        <title>Whole-genome comparison of Mycobacterium tuberculosis clinical and laboratory strains.</title>
        <authorList>
            <person name="Fleischmann R.D."/>
            <person name="Alland D."/>
            <person name="Eisen J.A."/>
            <person name="Carpenter L."/>
            <person name="White O."/>
            <person name="Peterson J.D."/>
            <person name="DeBoy R.T."/>
            <person name="Dodson R.J."/>
            <person name="Gwinn M.L."/>
            <person name="Haft D.H."/>
            <person name="Hickey E.K."/>
            <person name="Kolonay J.F."/>
            <person name="Nelson W.C."/>
            <person name="Umayam L.A."/>
            <person name="Ermolaeva M.D."/>
            <person name="Salzberg S.L."/>
            <person name="Delcher A."/>
            <person name="Utterback T.R."/>
            <person name="Weidman J.F."/>
            <person name="Khouri H.M."/>
            <person name="Gill J."/>
            <person name="Mikula A."/>
            <person name="Bishai W."/>
            <person name="Jacobs W.R. Jr."/>
            <person name="Venter J.C."/>
            <person name="Fraser C.M."/>
        </authorList>
    </citation>
    <scope>NUCLEOTIDE SEQUENCE [LARGE SCALE GENOMIC DNA]</scope>
    <source>
        <strain>CDC 1551 / Oshkosh</strain>
    </source>
</reference>
<keyword id="KW-0067">ATP-binding</keyword>
<keyword id="KW-0997">Cell inner membrane</keyword>
<keyword id="KW-1003">Cell membrane</keyword>
<keyword id="KW-0472">Membrane</keyword>
<keyword id="KW-0547">Nucleotide-binding</keyword>
<keyword id="KW-1185">Reference proteome</keyword>
<keyword id="KW-1278">Translocase</keyword>
<keyword id="KW-0812">Transmembrane</keyword>
<keyword id="KW-1133">Transmembrane helix</keyword>
<keyword id="KW-0813">Transport</keyword>